<protein>
    <recommendedName>
        <fullName>Chondroadherin-like protein</fullName>
    </recommendedName>
</protein>
<gene>
    <name type="primary">Chadl</name>
    <name type="synonym">SLRR4B</name>
</gene>
<reference key="1">
    <citation type="journal article" date="2009" name="PLoS Biol.">
        <title>Lineage-specific biology revealed by a finished genome assembly of the mouse.</title>
        <authorList>
            <person name="Church D.M."/>
            <person name="Goodstadt L."/>
            <person name="Hillier L.W."/>
            <person name="Zody M.C."/>
            <person name="Goldstein S."/>
            <person name="She X."/>
            <person name="Bult C.J."/>
            <person name="Agarwala R."/>
            <person name="Cherry J.L."/>
            <person name="DiCuccio M."/>
            <person name="Hlavina W."/>
            <person name="Kapustin Y."/>
            <person name="Meric P."/>
            <person name="Maglott D."/>
            <person name="Birtle Z."/>
            <person name="Marques A.C."/>
            <person name="Graves T."/>
            <person name="Zhou S."/>
            <person name="Teague B."/>
            <person name="Potamousis K."/>
            <person name="Churas C."/>
            <person name="Place M."/>
            <person name="Herschleb J."/>
            <person name="Runnheim R."/>
            <person name="Forrest D."/>
            <person name="Amos-Landgraf J."/>
            <person name="Schwartz D.C."/>
            <person name="Cheng Z."/>
            <person name="Lindblad-Toh K."/>
            <person name="Eichler E.E."/>
            <person name="Ponting C.P."/>
        </authorList>
    </citation>
    <scope>NUCLEOTIDE SEQUENCE [LARGE SCALE GENOMIC DNA]</scope>
    <source>
        <strain>C57BL/6J</strain>
    </source>
</reference>
<reference key="2">
    <citation type="journal article" date="2015" name="J. Biol. Chem.">
        <title>The novel small leucine-rich protein chondroadherin-like (CHADL) is expressed in cartilage and modulates chondrocyte differentiation.</title>
        <authorList>
            <person name="Tillgren V."/>
            <person name="Ho J.C."/>
            <person name="Oennerfjord P."/>
            <person name="Kalamajski S."/>
        </authorList>
    </citation>
    <scope>FUNCTION</scope>
    <scope>SUBCELLULAR LOCATION</scope>
    <scope>DEVELOPMENTAL STAGE</scope>
    <scope>TISSUE SPECIFICITY</scope>
</reference>
<name>CHADL_MOUSE</name>
<keyword id="KW-1015">Disulfide bond</keyword>
<keyword id="KW-0272">Extracellular matrix</keyword>
<keyword id="KW-0325">Glycoprotein</keyword>
<keyword id="KW-0433">Leucine-rich repeat</keyword>
<keyword id="KW-1185">Reference proteome</keyword>
<keyword id="KW-0677">Repeat</keyword>
<keyword id="KW-0964">Secreted</keyword>
<keyword id="KW-0732">Signal</keyword>
<organism>
    <name type="scientific">Mus musculus</name>
    <name type="common">Mouse</name>
    <dbReference type="NCBI Taxonomy" id="10090"/>
    <lineage>
        <taxon>Eukaryota</taxon>
        <taxon>Metazoa</taxon>
        <taxon>Chordata</taxon>
        <taxon>Craniata</taxon>
        <taxon>Vertebrata</taxon>
        <taxon>Euteleostomi</taxon>
        <taxon>Mammalia</taxon>
        <taxon>Eutheria</taxon>
        <taxon>Euarchontoglires</taxon>
        <taxon>Glires</taxon>
        <taxon>Rodentia</taxon>
        <taxon>Myomorpha</taxon>
        <taxon>Muroidea</taxon>
        <taxon>Muridae</taxon>
        <taxon>Murinae</taxon>
        <taxon>Mus</taxon>
        <taxon>Mus</taxon>
    </lineage>
</organism>
<accession>E9Q7T7</accession>
<sequence length="748" mass="81361">MERPQSSIWVFMLLLFMVLLQSPAWHVAAQRCPQTCVCDNSRRHVTCRHQNLTEVPNTIPELTQRLDLQGNILKVLPAAAFQDLPHLTHLDLRNCQVEMVAEGAFRGLGRLLLLNLASNRLSTLPQEALDGLGSLRRLELEGNMLEELRPGTFGALGSLTTLNLAHNALVYLPAMAFQGLLRTRWLQLSHNALSVLAPEALAGLPALRRLSLHHNELQALPGAALSQARSLARLELGHNPLTYTGEEDGLALPGLRELALDHGSLQALGPRAFAHCPRLHTLDLRGNQLTTLPPLQVPGQLRRLRLQGNPLWCACHARPLLEWLVRARVRSDGACRGPRRLRGEALDTLRPSDLRCPGDAAAGDGDGDEDEDRPAGPRAPPLRSPHGEAAWATPCPPACACVAETRHSTCDGRGLQAVPRGFPNDTQLLDLRRNHFPSVPRAAFPGLRHLVSLHLQHCGVAELEPGALAGLDRLLYLYLSHNQLSGLSAAALEGAPNLGYLYLEHNRFLRIPGTALRALPTLVSLHLQDNAVDRLAPGDLAGARALRCLYLSGNHITQVSPGALGPARELEKLHLDRNRLREVPTGALEGLPALKELQLSGNPLRALPDGAFQPVGRSLQQLFLNSSDLEQISPRAFSGLGKGLRSLYLHKNQLQSLPAPLGLSGLELVDLSGNPFHCDCQLLPLHRWLTGLNLRVGATCATPPSVRGQKVKVAAPVFEACPGWTARKAKRTPTSRGSARRTPSLSRH</sequence>
<comment type="function">
    <text evidence="5">Potential negative modulator of chondrocyte differentiation. Inhibits collagen fibrillogenesis in vitro. May influence chondrocyte's differentiation by acting on its cellular collagenous microenvironment.</text>
</comment>
<comment type="subunit">
    <text evidence="2">Associates with collagen and binds to collagen fibrils.</text>
</comment>
<comment type="subcellular location">
    <subcellularLocation>
        <location evidence="5">Secreted</location>
        <location evidence="5">Extracellular space</location>
        <location evidence="5">Extracellular matrix</location>
    </subcellularLocation>
</comment>
<comment type="tissue specificity">
    <text evidence="5">Expressed in cartilage, including articular knee cartilage, where it localizes to the extracellular space in the area immediately surrounding the chondrocytes, not detected in any other tissues (at protein level).</text>
</comment>
<comment type="developmental stage">
    <text evidence="5">Not detected before 13.5 dpc. From 13.5 dpc on, prominently expressed only in mesenchymal condensations and in cartilaginous tissues. In the ATDC5 cell line model, up-regulated during chondrocyte differentiation, absent in precondrogenic, non-differentiating stage (at protein level).</text>
</comment>
<comment type="similarity">
    <text evidence="6">Belongs to the small leucine-rich proteoglycan (SLRP) family. SLRP class IV subfamily.</text>
</comment>
<proteinExistence type="evidence at protein level"/>
<dbReference type="EMBL" id="AC102262">
    <property type="status" value="NOT_ANNOTATED_CDS"/>
    <property type="molecule type" value="Genomic_DNA"/>
</dbReference>
<dbReference type="CCDS" id="CCDS49677.1"/>
<dbReference type="RefSeq" id="NP_001157792.1">
    <property type="nucleotide sequence ID" value="NM_001164320.1"/>
</dbReference>
<dbReference type="SMR" id="E9Q7T7"/>
<dbReference type="FunCoup" id="E9Q7T7">
    <property type="interactions" value="143"/>
</dbReference>
<dbReference type="STRING" id="10090.ENSMUSP00000072682"/>
<dbReference type="GlyConnect" id="2212">
    <property type="glycosylation" value="1 N-Linked glycan (1 site)"/>
</dbReference>
<dbReference type="GlyCosmos" id="E9Q7T7">
    <property type="glycosylation" value="2 sites, 1 glycan"/>
</dbReference>
<dbReference type="GlyGen" id="E9Q7T7">
    <property type="glycosylation" value="3 sites, 3 N-linked glycans (3 sites)"/>
</dbReference>
<dbReference type="iPTMnet" id="E9Q7T7"/>
<dbReference type="PhosphoSitePlus" id="E9Q7T7"/>
<dbReference type="SwissPalm" id="E9Q7T7"/>
<dbReference type="PaxDb" id="10090-ENSMUSP00000072682"/>
<dbReference type="ProteomicsDB" id="281122"/>
<dbReference type="Antibodypedia" id="332">
    <property type="antibodies" value="76 antibodies from 18 providers"/>
</dbReference>
<dbReference type="Ensembl" id="ENSMUST00000072910.6">
    <property type="protein sequence ID" value="ENSMUSP00000072682.6"/>
    <property type="gene ID" value="ENSMUSG00000063765.13"/>
</dbReference>
<dbReference type="GeneID" id="214685"/>
<dbReference type="KEGG" id="mmu:214685"/>
<dbReference type="UCSC" id="uc007wwy.2">
    <property type="organism name" value="mouse"/>
</dbReference>
<dbReference type="AGR" id="MGI:3036284"/>
<dbReference type="CTD" id="150356"/>
<dbReference type="MGI" id="MGI:3036284">
    <property type="gene designation" value="Chadl"/>
</dbReference>
<dbReference type="VEuPathDB" id="HostDB:ENSMUSG00000063765"/>
<dbReference type="eggNOG" id="KOG0619">
    <property type="taxonomic scope" value="Eukaryota"/>
</dbReference>
<dbReference type="GeneTree" id="ENSGT00940000154464"/>
<dbReference type="HOGENOM" id="CLU_022061_0_0_1"/>
<dbReference type="InParanoid" id="E9Q7T7"/>
<dbReference type="OMA" id="EAQHATC"/>
<dbReference type="OrthoDB" id="643377at2759"/>
<dbReference type="PhylomeDB" id="E9Q7T7"/>
<dbReference type="TreeFam" id="TF337463"/>
<dbReference type="BioGRID-ORCS" id="214685">
    <property type="hits" value="3 hits in 78 CRISPR screens"/>
</dbReference>
<dbReference type="ChiTaRS" id="Chadl">
    <property type="organism name" value="mouse"/>
</dbReference>
<dbReference type="PRO" id="PR:E9Q7T7"/>
<dbReference type="Proteomes" id="UP000000589">
    <property type="component" value="Chromosome 15"/>
</dbReference>
<dbReference type="RNAct" id="E9Q7T7">
    <property type="molecule type" value="protein"/>
</dbReference>
<dbReference type="Bgee" id="ENSMUSG00000063765">
    <property type="expression patterns" value="Expressed in humerus cartilage element and 99 other cell types or tissues"/>
</dbReference>
<dbReference type="ExpressionAtlas" id="E9Q7T7">
    <property type="expression patterns" value="baseline and differential"/>
</dbReference>
<dbReference type="GO" id="GO:0062023">
    <property type="term" value="C:collagen-containing extracellular matrix"/>
    <property type="evidence" value="ECO:0000314"/>
    <property type="project" value="UniProtKB"/>
</dbReference>
<dbReference type="GO" id="GO:0005576">
    <property type="term" value="C:extracellular region"/>
    <property type="evidence" value="ECO:0007669"/>
    <property type="project" value="UniProtKB-KW"/>
</dbReference>
<dbReference type="GO" id="GO:0005518">
    <property type="term" value="F:collagen binding"/>
    <property type="evidence" value="ECO:0000250"/>
    <property type="project" value="UniProtKB"/>
</dbReference>
<dbReference type="GO" id="GO:0098633">
    <property type="term" value="F:collagen fibril binding"/>
    <property type="evidence" value="ECO:0000250"/>
    <property type="project" value="UniProtKB"/>
</dbReference>
<dbReference type="GO" id="GO:0032331">
    <property type="term" value="P:negative regulation of chondrocyte differentiation"/>
    <property type="evidence" value="ECO:0000315"/>
    <property type="project" value="UniProtKB"/>
</dbReference>
<dbReference type="GO" id="GO:1904027">
    <property type="term" value="P:negative regulation of collagen fibril organization"/>
    <property type="evidence" value="ECO:0000250"/>
    <property type="project" value="UniProtKB"/>
</dbReference>
<dbReference type="FunFam" id="3.80.10.10:FF:000059">
    <property type="entry name" value="Chondroadherin like"/>
    <property type="match status" value="1"/>
</dbReference>
<dbReference type="FunFam" id="3.80.10.10:FF:000368">
    <property type="entry name" value="Chondroadherin like"/>
    <property type="match status" value="1"/>
</dbReference>
<dbReference type="FunFam" id="3.80.10.10:FF:000311">
    <property type="entry name" value="Chondroadherin-like a"/>
    <property type="match status" value="1"/>
</dbReference>
<dbReference type="Gene3D" id="3.80.10.10">
    <property type="entry name" value="Ribonuclease Inhibitor"/>
    <property type="match status" value="3"/>
</dbReference>
<dbReference type="InterPro" id="IPR000483">
    <property type="entry name" value="Cys-rich_flank_reg_C"/>
</dbReference>
<dbReference type="InterPro" id="IPR001611">
    <property type="entry name" value="Leu-rich_rpt"/>
</dbReference>
<dbReference type="InterPro" id="IPR003591">
    <property type="entry name" value="Leu-rich_rpt_typical-subtyp"/>
</dbReference>
<dbReference type="InterPro" id="IPR032675">
    <property type="entry name" value="LRR_dom_sf"/>
</dbReference>
<dbReference type="InterPro" id="IPR050541">
    <property type="entry name" value="LRR_TM_domain-containing"/>
</dbReference>
<dbReference type="InterPro" id="IPR000372">
    <property type="entry name" value="LRRNT"/>
</dbReference>
<dbReference type="PANTHER" id="PTHR24369">
    <property type="entry name" value="ANTIGEN BSP, PUTATIVE-RELATED"/>
    <property type="match status" value="1"/>
</dbReference>
<dbReference type="PANTHER" id="PTHR24369:SF210">
    <property type="entry name" value="CHAOPTIN-RELATED"/>
    <property type="match status" value="1"/>
</dbReference>
<dbReference type="Pfam" id="PF00560">
    <property type="entry name" value="LRR_1"/>
    <property type="match status" value="1"/>
</dbReference>
<dbReference type="Pfam" id="PF13855">
    <property type="entry name" value="LRR_8"/>
    <property type="match status" value="6"/>
</dbReference>
<dbReference type="Pfam" id="PF01463">
    <property type="entry name" value="LRRCT"/>
    <property type="match status" value="2"/>
</dbReference>
<dbReference type="SMART" id="SM00364">
    <property type="entry name" value="LRR_BAC"/>
    <property type="match status" value="9"/>
</dbReference>
<dbReference type="SMART" id="SM00369">
    <property type="entry name" value="LRR_TYP"/>
    <property type="match status" value="19"/>
</dbReference>
<dbReference type="SMART" id="SM00082">
    <property type="entry name" value="LRRCT"/>
    <property type="match status" value="2"/>
</dbReference>
<dbReference type="SMART" id="SM00013">
    <property type="entry name" value="LRRNT"/>
    <property type="match status" value="2"/>
</dbReference>
<dbReference type="SUPFAM" id="SSF52058">
    <property type="entry name" value="L domain-like"/>
    <property type="match status" value="2"/>
</dbReference>
<dbReference type="PROSITE" id="PS51450">
    <property type="entry name" value="LRR"/>
    <property type="match status" value="19"/>
</dbReference>
<evidence type="ECO:0000250" key="1"/>
<evidence type="ECO:0000250" key="2">
    <source>
        <dbReference type="UniProtKB" id="Q6NUI6"/>
    </source>
</evidence>
<evidence type="ECO:0000255" key="3"/>
<evidence type="ECO:0000256" key="4">
    <source>
        <dbReference type="SAM" id="MobiDB-lite"/>
    </source>
</evidence>
<evidence type="ECO:0000269" key="5">
    <source>
    </source>
</evidence>
<evidence type="ECO:0000305" key="6"/>
<feature type="signal peptide" evidence="3">
    <location>
        <begin position="1"/>
        <end position="29"/>
    </location>
</feature>
<feature type="chain" id="PRO_0000432866" description="Chondroadherin-like protein" evidence="3">
    <location>
        <begin position="30"/>
        <end position="748"/>
    </location>
</feature>
<feature type="domain" description="LRRNT 1" evidence="3">
    <location>
        <begin position="30"/>
        <end position="61"/>
    </location>
</feature>
<feature type="repeat" description="LRR 1" evidence="3">
    <location>
        <begin position="85"/>
        <end position="107"/>
    </location>
</feature>
<feature type="repeat" description="LRR 2" evidence="3">
    <location>
        <begin position="108"/>
        <end position="131"/>
    </location>
</feature>
<feature type="repeat" description="LRR 3" evidence="3">
    <location>
        <begin position="132"/>
        <end position="155"/>
    </location>
</feature>
<feature type="repeat" description="LRR 4" evidence="3">
    <location>
        <begin position="156"/>
        <end position="179"/>
    </location>
</feature>
<feature type="repeat" description="LRR 5" evidence="3">
    <location>
        <begin position="181"/>
        <end position="203"/>
    </location>
</feature>
<feature type="repeat" description="LRR 6" evidence="3">
    <location>
        <begin position="204"/>
        <end position="227"/>
    </location>
</feature>
<feature type="repeat" description="LRR 7" evidence="3">
    <location>
        <begin position="229"/>
        <end position="252"/>
    </location>
</feature>
<feature type="repeat" description="LRR 8" evidence="3">
    <location>
        <begin position="253"/>
        <end position="275"/>
    </location>
</feature>
<feature type="repeat" description="LRR 9" evidence="3">
    <location>
        <begin position="276"/>
        <end position="299"/>
    </location>
</feature>
<feature type="domain" description="LRRCT 1" evidence="3">
    <location>
        <begin position="309"/>
        <end position="357"/>
    </location>
</feature>
<feature type="domain" description="LRRNT 2" evidence="3">
    <location>
        <begin position="394"/>
        <end position="428"/>
    </location>
</feature>
<feature type="repeat" description="LRR 10" evidence="3">
    <location>
        <begin position="423"/>
        <end position="446"/>
    </location>
</feature>
<feature type="repeat" description="LRR 11" evidence="3">
    <location>
        <begin position="448"/>
        <end position="470"/>
    </location>
</feature>
<feature type="repeat" description="LRR 12" evidence="3">
    <location>
        <begin position="471"/>
        <end position="494"/>
    </location>
</feature>
<feature type="repeat" description="LRR 13" evidence="3">
    <location>
        <begin position="496"/>
        <end position="518"/>
    </location>
</feature>
<feature type="repeat" description="LRR 14" evidence="3">
    <location>
        <begin position="519"/>
        <end position="542"/>
    </location>
</feature>
<feature type="repeat" description="LRR 15" evidence="3">
    <location>
        <begin position="544"/>
        <end position="566"/>
    </location>
</feature>
<feature type="repeat" description="LRR 16" evidence="3">
    <location>
        <begin position="567"/>
        <end position="590"/>
    </location>
</feature>
<feature type="repeat" description="LRR 17" evidence="3">
    <location>
        <begin position="591"/>
        <end position="614"/>
    </location>
</feature>
<feature type="repeat" description="LRR 18" evidence="3">
    <location>
        <begin position="616"/>
        <end position="639"/>
    </location>
</feature>
<feature type="repeat" description="LRR 19" evidence="3">
    <location>
        <begin position="641"/>
        <end position="665"/>
    </location>
</feature>
<feature type="domain" description="LRRCT 2" evidence="3">
    <location>
        <begin position="674"/>
        <end position="722"/>
    </location>
</feature>
<feature type="region of interest" description="Disordered" evidence="4">
    <location>
        <begin position="352"/>
        <end position="389"/>
    </location>
</feature>
<feature type="region of interest" description="Disordered" evidence="4">
    <location>
        <begin position="728"/>
        <end position="748"/>
    </location>
</feature>
<feature type="compositionally biased region" description="Polar residues" evidence="4">
    <location>
        <begin position="734"/>
        <end position="748"/>
    </location>
</feature>
<feature type="glycosylation site" description="N-linked (GlcNAc...) asparagine" evidence="3">
    <location>
        <position position="51"/>
    </location>
</feature>
<feature type="glycosylation site" description="N-linked (GlcNAc...) asparagine" evidence="3">
    <location>
        <position position="625"/>
    </location>
</feature>
<feature type="disulfide bond" evidence="1">
    <location>
        <begin position="395"/>
        <end position="410"/>
    </location>
</feature>
<feature type="disulfide bond" evidence="1">
    <location>
        <begin position="678"/>
        <end position="721"/>
    </location>
</feature>
<feature type="disulfide bond" evidence="1">
    <location>
        <begin position="680"/>
        <end position="700"/>
    </location>
</feature>